<gene>
    <name evidence="1" type="primary">mnmA3</name>
    <name type="ordered locus">BF4001</name>
</gene>
<proteinExistence type="inferred from homology"/>
<name>MNMA3_BACFR</name>
<feature type="chain" id="PRO_0000349523" description="tRNA-specific 2-thiouridylase MnmA 3">
    <location>
        <begin position="1"/>
        <end position="362"/>
    </location>
</feature>
<feature type="region of interest" description="Interaction with tRNA" evidence="1">
    <location>
        <begin position="137"/>
        <end position="139"/>
    </location>
</feature>
<feature type="region of interest" description="Interaction with tRNA" evidence="1">
    <location>
        <begin position="296"/>
        <end position="297"/>
    </location>
</feature>
<feature type="active site" description="Nucleophile" evidence="1">
    <location>
        <position position="91"/>
    </location>
</feature>
<feature type="active site" description="Cysteine persulfide intermediate" evidence="1">
    <location>
        <position position="188"/>
    </location>
</feature>
<feature type="binding site" evidence="1">
    <location>
        <begin position="11"/>
        <end position="18"/>
    </location>
    <ligand>
        <name>ATP</name>
        <dbReference type="ChEBI" id="CHEBI:30616"/>
    </ligand>
</feature>
<feature type="binding site" evidence="1">
    <location>
        <position position="37"/>
    </location>
    <ligand>
        <name>ATP</name>
        <dbReference type="ChEBI" id="CHEBI:30616"/>
    </ligand>
</feature>
<feature type="binding site" evidence="1">
    <location>
        <position position="115"/>
    </location>
    <ligand>
        <name>ATP</name>
        <dbReference type="ChEBI" id="CHEBI:30616"/>
    </ligand>
</feature>
<feature type="site" description="Interaction with tRNA" evidence="1">
    <location>
        <position position="116"/>
    </location>
</feature>
<feature type="site" description="Interaction with tRNA" evidence="1">
    <location>
        <position position="329"/>
    </location>
</feature>
<feature type="disulfide bond" description="Alternate" evidence="1">
    <location>
        <begin position="91"/>
        <end position="188"/>
    </location>
</feature>
<sequence>MKESKKRVLVGMSGGIDSTATCLMLQEQGYEIVGVTMRVWGDEPQDARELAARMGIEHYVADERVPFKDTIVKNFIDEYRQGRTPNPCVMCNPLFKFRMLIEWADKLGCDWIATGHYSRLEERNGHIYIVAGDDDKKDQSYFLWRLGQDVLRRCIFPLGNYTKQTVRDYLHEKGYEAKSKEGESMEVCFIKGDYRDFLREQCPELDAEVGPGWFVSSEGVKLGQHKGFPYYTIGQRKGLEIALGKPAYVLKINPQKNTVMLGDAGQLKAEYMVAEQDNIVDEDELFACPDLAVRIRYRSRPIPCRVKRLEDGHLLVRFLAEASAIAPGQSAVFYEGRRVLGGAFIASQRGIGLVIEQNKDWK</sequence>
<protein>
    <recommendedName>
        <fullName evidence="1">tRNA-specific 2-thiouridylase MnmA 3</fullName>
        <ecNumber evidence="1">2.8.1.13</ecNumber>
    </recommendedName>
</protein>
<dbReference type="EC" id="2.8.1.13" evidence="1"/>
<dbReference type="EMBL" id="AP006841">
    <property type="protein sequence ID" value="BAD50743.1"/>
    <property type="molecule type" value="Genomic_DNA"/>
</dbReference>
<dbReference type="RefSeq" id="YP_101277.1">
    <property type="nucleotide sequence ID" value="NC_006347.1"/>
</dbReference>
<dbReference type="SMR" id="Q64P39"/>
<dbReference type="STRING" id="295405.BF4001"/>
<dbReference type="KEGG" id="bfr:BF4001"/>
<dbReference type="PATRIC" id="fig|295405.11.peg.3851"/>
<dbReference type="HOGENOM" id="CLU_035188_0_0_10"/>
<dbReference type="OrthoDB" id="9800696at2"/>
<dbReference type="Proteomes" id="UP000002197">
    <property type="component" value="Chromosome"/>
</dbReference>
<dbReference type="GO" id="GO:0005737">
    <property type="term" value="C:cytoplasm"/>
    <property type="evidence" value="ECO:0007669"/>
    <property type="project" value="UniProtKB-SubCell"/>
</dbReference>
<dbReference type="GO" id="GO:0005524">
    <property type="term" value="F:ATP binding"/>
    <property type="evidence" value="ECO:0007669"/>
    <property type="project" value="UniProtKB-KW"/>
</dbReference>
<dbReference type="GO" id="GO:0000049">
    <property type="term" value="F:tRNA binding"/>
    <property type="evidence" value="ECO:0007669"/>
    <property type="project" value="UniProtKB-KW"/>
</dbReference>
<dbReference type="GO" id="GO:0103016">
    <property type="term" value="F:tRNA-uridine 2-sulfurtransferase activity"/>
    <property type="evidence" value="ECO:0007669"/>
    <property type="project" value="UniProtKB-EC"/>
</dbReference>
<dbReference type="GO" id="GO:0002143">
    <property type="term" value="P:tRNA wobble position uridine thiolation"/>
    <property type="evidence" value="ECO:0007669"/>
    <property type="project" value="TreeGrafter"/>
</dbReference>
<dbReference type="CDD" id="cd01998">
    <property type="entry name" value="MnmA_TRMU-like"/>
    <property type="match status" value="1"/>
</dbReference>
<dbReference type="FunFam" id="2.30.30.280:FF:000001">
    <property type="entry name" value="tRNA-specific 2-thiouridylase MnmA"/>
    <property type="match status" value="1"/>
</dbReference>
<dbReference type="FunFam" id="2.40.30.10:FF:000127">
    <property type="entry name" value="tRNA-specific 2-thiouridylase MnmA"/>
    <property type="match status" value="1"/>
</dbReference>
<dbReference type="FunFam" id="3.40.50.620:FF:000210">
    <property type="entry name" value="tRNA-specific 2-thiouridylase MnmA"/>
    <property type="match status" value="1"/>
</dbReference>
<dbReference type="Gene3D" id="2.30.30.280">
    <property type="entry name" value="Adenine nucleotide alpha hydrolases-like domains"/>
    <property type="match status" value="1"/>
</dbReference>
<dbReference type="Gene3D" id="3.40.50.620">
    <property type="entry name" value="HUPs"/>
    <property type="match status" value="1"/>
</dbReference>
<dbReference type="Gene3D" id="2.40.30.10">
    <property type="entry name" value="Translation factors"/>
    <property type="match status" value="1"/>
</dbReference>
<dbReference type="HAMAP" id="MF_00144">
    <property type="entry name" value="tRNA_thiouridyl_MnmA"/>
    <property type="match status" value="1"/>
</dbReference>
<dbReference type="InterPro" id="IPR004506">
    <property type="entry name" value="MnmA-like"/>
</dbReference>
<dbReference type="InterPro" id="IPR046885">
    <property type="entry name" value="MnmA-like_C"/>
</dbReference>
<dbReference type="InterPro" id="IPR046884">
    <property type="entry name" value="MnmA-like_central"/>
</dbReference>
<dbReference type="InterPro" id="IPR023382">
    <property type="entry name" value="MnmA-like_central_sf"/>
</dbReference>
<dbReference type="InterPro" id="IPR014729">
    <property type="entry name" value="Rossmann-like_a/b/a_fold"/>
</dbReference>
<dbReference type="NCBIfam" id="NF001138">
    <property type="entry name" value="PRK00143.1"/>
    <property type="match status" value="1"/>
</dbReference>
<dbReference type="NCBIfam" id="NF011258">
    <property type="entry name" value="PRK14664.1"/>
    <property type="match status" value="1"/>
</dbReference>
<dbReference type="NCBIfam" id="TIGR00420">
    <property type="entry name" value="trmU"/>
    <property type="match status" value="1"/>
</dbReference>
<dbReference type="PANTHER" id="PTHR11933:SF5">
    <property type="entry name" value="MITOCHONDRIAL TRNA-SPECIFIC 2-THIOURIDYLASE 1"/>
    <property type="match status" value="1"/>
</dbReference>
<dbReference type="PANTHER" id="PTHR11933">
    <property type="entry name" value="TRNA 5-METHYLAMINOMETHYL-2-THIOURIDYLATE -METHYLTRANSFERASE"/>
    <property type="match status" value="1"/>
</dbReference>
<dbReference type="Pfam" id="PF03054">
    <property type="entry name" value="tRNA_Me_trans"/>
    <property type="match status" value="1"/>
</dbReference>
<dbReference type="Pfam" id="PF20258">
    <property type="entry name" value="tRNA_Me_trans_C"/>
    <property type="match status" value="1"/>
</dbReference>
<dbReference type="Pfam" id="PF20259">
    <property type="entry name" value="tRNA_Me_trans_M"/>
    <property type="match status" value="1"/>
</dbReference>
<dbReference type="SUPFAM" id="SSF52402">
    <property type="entry name" value="Adenine nucleotide alpha hydrolases-like"/>
    <property type="match status" value="1"/>
</dbReference>
<reference key="1">
    <citation type="journal article" date="2004" name="Proc. Natl. Acad. Sci. U.S.A.">
        <title>Genomic analysis of Bacteroides fragilis reveals extensive DNA inversions regulating cell surface adaptation.</title>
        <authorList>
            <person name="Kuwahara T."/>
            <person name="Yamashita A."/>
            <person name="Hirakawa H."/>
            <person name="Nakayama H."/>
            <person name="Toh H."/>
            <person name="Okada N."/>
            <person name="Kuhara S."/>
            <person name="Hattori M."/>
            <person name="Hayashi T."/>
            <person name="Ohnishi Y."/>
        </authorList>
    </citation>
    <scope>NUCLEOTIDE SEQUENCE [LARGE SCALE GENOMIC DNA]</scope>
    <source>
        <strain>YCH46</strain>
    </source>
</reference>
<evidence type="ECO:0000255" key="1">
    <source>
        <dbReference type="HAMAP-Rule" id="MF_00144"/>
    </source>
</evidence>
<keyword id="KW-0067">ATP-binding</keyword>
<keyword id="KW-0963">Cytoplasm</keyword>
<keyword id="KW-1015">Disulfide bond</keyword>
<keyword id="KW-0547">Nucleotide-binding</keyword>
<keyword id="KW-0694">RNA-binding</keyword>
<keyword id="KW-0808">Transferase</keyword>
<keyword id="KW-0819">tRNA processing</keyword>
<keyword id="KW-0820">tRNA-binding</keyword>
<comment type="function">
    <text evidence="1">Catalyzes the 2-thiolation of uridine at the wobble position (U34) of tRNA, leading to the formation of s(2)U34.</text>
</comment>
<comment type="catalytic activity">
    <reaction evidence="1">
        <text>S-sulfanyl-L-cysteinyl-[protein] + uridine(34) in tRNA + AH2 + ATP = 2-thiouridine(34) in tRNA + L-cysteinyl-[protein] + A + AMP + diphosphate + H(+)</text>
        <dbReference type="Rhea" id="RHEA:47032"/>
        <dbReference type="Rhea" id="RHEA-COMP:10131"/>
        <dbReference type="Rhea" id="RHEA-COMP:11726"/>
        <dbReference type="Rhea" id="RHEA-COMP:11727"/>
        <dbReference type="Rhea" id="RHEA-COMP:11728"/>
        <dbReference type="ChEBI" id="CHEBI:13193"/>
        <dbReference type="ChEBI" id="CHEBI:15378"/>
        <dbReference type="ChEBI" id="CHEBI:17499"/>
        <dbReference type="ChEBI" id="CHEBI:29950"/>
        <dbReference type="ChEBI" id="CHEBI:30616"/>
        <dbReference type="ChEBI" id="CHEBI:33019"/>
        <dbReference type="ChEBI" id="CHEBI:61963"/>
        <dbReference type="ChEBI" id="CHEBI:65315"/>
        <dbReference type="ChEBI" id="CHEBI:87170"/>
        <dbReference type="ChEBI" id="CHEBI:456215"/>
        <dbReference type="EC" id="2.8.1.13"/>
    </reaction>
</comment>
<comment type="subcellular location">
    <subcellularLocation>
        <location evidence="1">Cytoplasm</location>
    </subcellularLocation>
</comment>
<comment type="similarity">
    <text evidence="1">Belongs to the MnmA/TRMU family.</text>
</comment>
<organism>
    <name type="scientific">Bacteroides fragilis (strain YCH46)</name>
    <dbReference type="NCBI Taxonomy" id="295405"/>
    <lineage>
        <taxon>Bacteria</taxon>
        <taxon>Pseudomonadati</taxon>
        <taxon>Bacteroidota</taxon>
        <taxon>Bacteroidia</taxon>
        <taxon>Bacteroidales</taxon>
        <taxon>Bacteroidaceae</taxon>
        <taxon>Bacteroides</taxon>
    </lineage>
</organism>
<accession>Q64P39</accession>